<protein>
    <recommendedName>
        <fullName evidence="1">2,3-bisphosphoglycerate-independent phosphoglycerate mutase</fullName>
        <shortName evidence="1">BPG-independent PGAM</shortName>
        <shortName evidence="1">Phosphoglyceromutase</shortName>
        <shortName evidence="1">iPGM</shortName>
        <ecNumber evidence="1">5.4.2.12</ecNumber>
    </recommendedName>
</protein>
<sequence>MSVSKKPMVLVILDGYGYREEQQDNAIFSAKTPVMDALWANRPHTLIDASGLEVGLPDRQMGNSEVGHVNLGAGRIVYQDLTRLDVEIKDRAFFANPVLTGAVDKAKNAGKAVHIMGLLSAGGVHSHEDHIMAMVELAAERGAEKIYLHAFLDGRDTPPRSAESSLKKFEEKFAALGKGRVASIIGRYYAMDRDNRWDRVEKAYDLLTLAQGEFQADTTVAGLQAAYARDENDEFVKATVIRAEGQPDAAMEDGDALIFMNFRADRAREITRAFVNADFDGFARKKVVNVDFVMLTEYAADIKTAVAYPPASLVNTFGEWMAKNDKTQLRISETEKYAHVTFFFNGGVEESFKGEDRILINSPKVATYDLQPEMSSAELTEKLVAAIKSGKYDTIICNYPNGDMVGHTGVMEAAVKAVEALDHCVEEVAKAVESVGGQLLITADHGNAEQMRDPATGQAHTAHTNLPVPLIYVGDKNVKAVEGGKLSDIAPTMLSLMGMEIPQEMTGKPLFIVE</sequence>
<gene>
    <name evidence="1" type="primary">gpmI</name>
    <name type="ordered locus">c4438</name>
</gene>
<reference key="1">
    <citation type="journal article" date="2002" name="Proc. Natl. Acad. Sci. U.S.A.">
        <title>Extensive mosaic structure revealed by the complete genome sequence of uropathogenic Escherichia coli.</title>
        <authorList>
            <person name="Welch R.A."/>
            <person name="Burland V."/>
            <person name="Plunkett G. III"/>
            <person name="Redford P."/>
            <person name="Roesch P."/>
            <person name="Rasko D."/>
            <person name="Buckles E.L."/>
            <person name="Liou S.-R."/>
            <person name="Boutin A."/>
            <person name="Hackett J."/>
            <person name="Stroud D."/>
            <person name="Mayhew G.F."/>
            <person name="Rose D.J."/>
            <person name="Zhou S."/>
            <person name="Schwartz D.C."/>
            <person name="Perna N.T."/>
            <person name="Mobley H.L.T."/>
            <person name="Donnenberg M.S."/>
            <person name="Blattner F.R."/>
        </authorList>
    </citation>
    <scope>NUCLEOTIDE SEQUENCE [LARGE SCALE GENOMIC DNA]</scope>
    <source>
        <strain>CFT073 / ATCC 700928 / UPEC</strain>
    </source>
</reference>
<name>GPMI_ECOL6</name>
<feature type="chain" id="PRO_0000212147" description="2,3-bisphosphoglycerate-independent phosphoglycerate mutase">
    <location>
        <begin position="1"/>
        <end position="514"/>
    </location>
</feature>
<feature type="active site" description="Phosphoserine intermediate" evidence="1">
    <location>
        <position position="64"/>
    </location>
</feature>
<feature type="binding site" evidence="1">
    <location>
        <position position="14"/>
    </location>
    <ligand>
        <name>Mn(2+)</name>
        <dbReference type="ChEBI" id="CHEBI:29035"/>
        <label>2</label>
    </ligand>
</feature>
<feature type="binding site" evidence="1">
    <location>
        <position position="64"/>
    </location>
    <ligand>
        <name>Mn(2+)</name>
        <dbReference type="ChEBI" id="CHEBI:29035"/>
        <label>2</label>
    </ligand>
</feature>
<feature type="binding site" evidence="1">
    <location>
        <position position="125"/>
    </location>
    <ligand>
        <name>substrate</name>
    </ligand>
</feature>
<feature type="binding site" evidence="1">
    <location>
        <begin position="155"/>
        <end position="156"/>
    </location>
    <ligand>
        <name>substrate</name>
    </ligand>
</feature>
<feature type="binding site" evidence="1">
    <location>
        <position position="187"/>
    </location>
    <ligand>
        <name>substrate</name>
    </ligand>
</feature>
<feature type="binding site" evidence="1">
    <location>
        <position position="193"/>
    </location>
    <ligand>
        <name>substrate</name>
    </ligand>
</feature>
<feature type="binding site" evidence="1">
    <location>
        <begin position="263"/>
        <end position="266"/>
    </location>
    <ligand>
        <name>substrate</name>
    </ligand>
</feature>
<feature type="binding site" evidence="1">
    <location>
        <position position="336"/>
    </location>
    <ligand>
        <name>substrate</name>
    </ligand>
</feature>
<feature type="binding site" evidence="1">
    <location>
        <position position="403"/>
    </location>
    <ligand>
        <name>Mn(2+)</name>
        <dbReference type="ChEBI" id="CHEBI:29035"/>
        <label>1</label>
    </ligand>
</feature>
<feature type="binding site" evidence="1">
    <location>
        <position position="407"/>
    </location>
    <ligand>
        <name>Mn(2+)</name>
        <dbReference type="ChEBI" id="CHEBI:29035"/>
        <label>1</label>
    </ligand>
</feature>
<feature type="binding site" evidence="1">
    <location>
        <position position="444"/>
    </location>
    <ligand>
        <name>Mn(2+)</name>
        <dbReference type="ChEBI" id="CHEBI:29035"/>
        <label>2</label>
    </ligand>
</feature>
<feature type="binding site" evidence="1">
    <location>
        <position position="445"/>
    </location>
    <ligand>
        <name>Mn(2+)</name>
        <dbReference type="ChEBI" id="CHEBI:29035"/>
        <label>2</label>
    </ligand>
</feature>
<feature type="binding site" evidence="1">
    <location>
        <position position="463"/>
    </location>
    <ligand>
        <name>Mn(2+)</name>
        <dbReference type="ChEBI" id="CHEBI:29035"/>
        <label>1</label>
    </ligand>
</feature>
<dbReference type="EC" id="5.4.2.12" evidence="1"/>
<dbReference type="EMBL" id="AE014075">
    <property type="protein sequence ID" value="AAN82874.1"/>
    <property type="status" value="ALT_INIT"/>
    <property type="molecule type" value="Genomic_DNA"/>
</dbReference>
<dbReference type="RefSeq" id="WP_011076657.1">
    <property type="nucleotide sequence ID" value="NC_004431.1"/>
</dbReference>
<dbReference type="SMR" id="Q8FCA6"/>
<dbReference type="STRING" id="199310.c4438"/>
<dbReference type="KEGG" id="ecc:c4438"/>
<dbReference type="eggNOG" id="COG0696">
    <property type="taxonomic scope" value="Bacteria"/>
</dbReference>
<dbReference type="HOGENOM" id="CLU_026099_2_0_6"/>
<dbReference type="UniPathway" id="UPA00109">
    <property type="reaction ID" value="UER00186"/>
</dbReference>
<dbReference type="Proteomes" id="UP000001410">
    <property type="component" value="Chromosome"/>
</dbReference>
<dbReference type="GO" id="GO:0005829">
    <property type="term" value="C:cytosol"/>
    <property type="evidence" value="ECO:0007669"/>
    <property type="project" value="TreeGrafter"/>
</dbReference>
<dbReference type="GO" id="GO:0030145">
    <property type="term" value="F:manganese ion binding"/>
    <property type="evidence" value="ECO:0007669"/>
    <property type="project" value="UniProtKB-UniRule"/>
</dbReference>
<dbReference type="GO" id="GO:0004619">
    <property type="term" value="F:phosphoglycerate mutase activity"/>
    <property type="evidence" value="ECO:0007669"/>
    <property type="project" value="UniProtKB-EC"/>
</dbReference>
<dbReference type="GO" id="GO:0006007">
    <property type="term" value="P:glucose catabolic process"/>
    <property type="evidence" value="ECO:0007669"/>
    <property type="project" value="InterPro"/>
</dbReference>
<dbReference type="GO" id="GO:0006096">
    <property type="term" value="P:glycolytic process"/>
    <property type="evidence" value="ECO:0007669"/>
    <property type="project" value="UniProtKB-UniRule"/>
</dbReference>
<dbReference type="CDD" id="cd16010">
    <property type="entry name" value="iPGM"/>
    <property type="match status" value="1"/>
</dbReference>
<dbReference type="FunFam" id="3.40.1450.10:FF:000001">
    <property type="entry name" value="2,3-bisphosphoglycerate-independent phosphoglycerate mutase"/>
    <property type="match status" value="1"/>
</dbReference>
<dbReference type="FunFam" id="3.40.720.10:FF:000001">
    <property type="entry name" value="2,3-bisphosphoglycerate-independent phosphoglycerate mutase"/>
    <property type="match status" value="1"/>
</dbReference>
<dbReference type="Gene3D" id="3.40.720.10">
    <property type="entry name" value="Alkaline Phosphatase, subunit A"/>
    <property type="match status" value="1"/>
</dbReference>
<dbReference type="Gene3D" id="3.40.1450.10">
    <property type="entry name" value="BPG-independent phosphoglycerate mutase, domain B"/>
    <property type="match status" value="1"/>
</dbReference>
<dbReference type="HAMAP" id="MF_01038">
    <property type="entry name" value="GpmI"/>
    <property type="match status" value="1"/>
</dbReference>
<dbReference type="InterPro" id="IPR017850">
    <property type="entry name" value="Alkaline_phosphatase_core_sf"/>
</dbReference>
<dbReference type="InterPro" id="IPR011258">
    <property type="entry name" value="BPG-indep_PGM_N"/>
</dbReference>
<dbReference type="InterPro" id="IPR006124">
    <property type="entry name" value="Metalloenzyme"/>
</dbReference>
<dbReference type="InterPro" id="IPR036646">
    <property type="entry name" value="PGAM_B_sf"/>
</dbReference>
<dbReference type="InterPro" id="IPR005995">
    <property type="entry name" value="Pgm_bpd_ind"/>
</dbReference>
<dbReference type="NCBIfam" id="TIGR01307">
    <property type="entry name" value="pgm_bpd_ind"/>
    <property type="match status" value="1"/>
</dbReference>
<dbReference type="NCBIfam" id="NF003897">
    <property type="entry name" value="PRK05434.1-5"/>
    <property type="match status" value="1"/>
</dbReference>
<dbReference type="PANTHER" id="PTHR31637">
    <property type="entry name" value="2,3-BISPHOSPHOGLYCERATE-INDEPENDENT PHOSPHOGLYCERATE MUTASE"/>
    <property type="match status" value="1"/>
</dbReference>
<dbReference type="PANTHER" id="PTHR31637:SF0">
    <property type="entry name" value="2,3-BISPHOSPHOGLYCERATE-INDEPENDENT PHOSPHOGLYCERATE MUTASE"/>
    <property type="match status" value="1"/>
</dbReference>
<dbReference type="Pfam" id="PF06415">
    <property type="entry name" value="iPGM_N"/>
    <property type="match status" value="1"/>
</dbReference>
<dbReference type="Pfam" id="PF01676">
    <property type="entry name" value="Metalloenzyme"/>
    <property type="match status" value="1"/>
</dbReference>
<dbReference type="PIRSF" id="PIRSF001492">
    <property type="entry name" value="IPGAM"/>
    <property type="match status" value="1"/>
</dbReference>
<dbReference type="SUPFAM" id="SSF64158">
    <property type="entry name" value="2,3-Bisphosphoglycerate-independent phosphoglycerate mutase, substrate-binding domain"/>
    <property type="match status" value="1"/>
</dbReference>
<dbReference type="SUPFAM" id="SSF53649">
    <property type="entry name" value="Alkaline phosphatase-like"/>
    <property type="match status" value="1"/>
</dbReference>
<accession>Q8FCA6</accession>
<proteinExistence type="inferred from homology"/>
<comment type="function">
    <text evidence="1">Catalyzes the interconversion of 2-phosphoglycerate and 3-phosphoglycerate.</text>
</comment>
<comment type="catalytic activity">
    <reaction evidence="1">
        <text>(2R)-2-phosphoglycerate = (2R)-3-phosphoglycerate</text>
        <dbReference type="Rhea" id="RHEA:15901"/>
        <dbReference type="ChEBI" id="CHEBI:58272"/>
        <dbReference type="ChEBI" id="CHEBI:58289"/>
        <dbReference type="EC" id="5.4.2.12"/>
    </reaction>
</comment>
<comment type="cofactor">
    <cofactor evidence="1">
        <name>Mn(2+)</name>
        <dbReference type="ChEBI" id="CHEBI:29035"/>
    </cofactor>
    <text evidence="1">Binds 2 manganese ions per subunit.</text>
</comment>
<comment type="pathway">
    <text evidence="1">Carbohydrate degradation; glycolysis; pyruvate from D-glyceraldehyde 3-phosphate: step 3/5.</text>
</comment>
<comment type="subunit">
    <text evidence="1">Monomer.</text>
</comment>
<comment type="similarity">
    <text evidence="1">Belongs to the BPG-independent phosphoglycerate mutase family.</text>
</comment>
<comment type="sequence caution" evidence="2">
    <conflict type="erroneous initiation">
        <sequence resource="EMBL-CDS" id="AAN82874"/>
    </conflict>
    <text>Extended N-terminus.</text>
</comment>
<evidence type="ECO:0000255" key="1">
    <source>
        <dbReference type="HAMAP-Rule" id="MF_01038"/>
    </source>
</evidence>
<evidence type="ECO:0000305" key="2"/>
<keyword id="KW-0324">Glycolysis</keyword>
<keyword id="KW-0413">Isomerase</keyword>
<keyword id="KW-0464">Manganese</keyword>
<keyword id="KW-0479">Metal-binding</keyword>
<keyword id="KW-1185">Reference proteome</keyword>
<organism>
    <name type="scientific">Escherichia coli O6:H1 (strain CFT073 / ATCC 700928 / UPEC)</name>
    <dbReference type="NCBI Taxonomy" id="199310"/>
    <lineage>
        <taxon>Bacteria</taxon>
        <taxon>Pseudomonadati</taxon>
        <taxon>Pseudomonadota</taxon>
        <taxon>Gammaproteobacteria</taxon>
        <taxon>Enterobacterales</taxon>
        <taxon>Enterobacteriaceae</taxon>
        <taxon>Escherichia</taxon>
    </lineage>
</organism>